<name>RL31B_STAES</name>
<accession>Q8CRM8</accession>
<gene>
    <name evidence="1" type="primary">rpmE2</name>
    <name type="ordered locus">SE_1718</name>
</gene>
<proteinExistence type="inferred from homology"/>
<dbReference type="EMBL" id="AE015929">
    <property type="protein sequence ID" value="AAO05317.1"/>
    <property type="molecule type" value="Genomic_DNA"/>
</dbReference>
<dbReference type="RefSeq" id="NP_765273.1">
    <property type="nucleotide sequence ID" value="NC_004461.1"/>
</dbReference>
<dbReference type="RefSeq" id="WP_001829959.1">
    <property type="nucleotide sequence ID" value="NZ_WBME01000021.1"/>
</dbReference>
<dbReference type="SMR" id="Q8CRM8"/>
<dbReference type="KEGG" id="sep:SE_1718"/>
<dbReference type="PATRIC" id="fig|176280.10.peg.1678"/>
<dbReference type="eggNOG" id="COG0254">
    <property type="taxonomic scope" value="Bacteria"/>
</dbReference>
<dbReference type="HOGENOM" id="CLU_114306_2_2_9"/>
<dbReference type="OrthoDB" id="9803251at2"/>
<dbReference type="Proteomes" id="UP000001411">
    <property type="component" value="Chromosome"/>
</dbReference>
<dbReference type="GO" id="GO:1990904">
    <property type="term" value="C:ribonucleoprotein complex"/>
    <property type="evidence" value="ECO:0007669"/>
    <property type="project" value="UniProtKB-KW"/>
</dbReference>
<dbReference type="GO" id="GO:0005840">
    <property type="term" value="C:ribosome"/>
    <property type="evidence" value="ECO:0007669"/>
    <property type="project" value="UniProtKB-KW"/>
</dbReference>
<dbReference type="GO" id="GO:0003735">
    <property type="term" value="F:structural constituent of ribosome"/>
    <property type="evidence" value="ECO:0007669"/>
    <property type="project" value="InterPro"/>
</dbReference>
<dbReference type="GO" id="GO:0006412">
    <property type="term" value="P:translation"/>
    <property type="evidence" value="ECO:0007669"/>
    <property type="project" value="UniProtKB-UniRule"/>
</dbReference>
<dbReference type="Gene3D" id="4.10.830.30">
    <property type="entry name" value="Ribosomal protein L31"/>
    <property type="match status" value="1"/>
</dbReference>
<dbReference type="HAMAP" id="MF_00502">
    <property type="entry name" value="Ribosomal_bL31_2"/>
    <property type="match status" value="1"/>
</dbReference>
<dbReference type="InterPro" id="IPR034704">
    <property type="entry name" value="Ribosomal_bL28/bL31-like_sf"/>
</dbReference>
<dbReference type="InterPro" id="IPR002150">
    <property type="entry name" value="Ribosomal_bL31"/>
</dbReference>
<dbReference type="InterPro" id="IPR027493">
    <property type="entry name" value="Ribosomal_bL31_B"/>
</dbReference>
<dbReference type="InterPro" id="IPR042105">
    <property type="entry name" value="Ribosomal_bL31_sf"/>
</dbReference>
<dbReference type="NCBIfam" id="TIGR00105">
    <property type="entry name" value="L31"/>
    <property type="match status" value="1"/>
</dbReference>
<dbReference type="NCBIfam" id="NF002462">
    <property type="entry name" value="PRK01678.1"/>
    <property type="match status" value="1"/>
</dbReference>
<dbReference type="PANTHER" id="PTHR33280">
    <property type="entry name" value="50S RIBOSOMAL PROTEIN L31, CHLOROPLASTIC"/>
    <property type="match status" value="1"/>
</dbReference>
<dbReference type="PANTHER" id="PTHR33280:SF1">
    <property type="entry name" value="LARGE RIBOSOMAL SUBUNIT PROTEIN BL31C"/>
    <property type="match status" value="1"/>
</dbReference>
<dbReference type="Pfam" id="PF01197">
    <property type="entry name" value="Ribosomal_L31"/>
    <property type="match status" value="1"/>
</dbReference>
<dbReference type="PRINTS" id="PR01249">
    <property type="entry name" value="RIBOSOMALL31"/>
</dbReference>
<dbReference type="SUPFAM" id="SSF143800">
    <property type="entry name" value="L28p-like"/>
    <property type="match status" value="1"/>
</dbReference>
<dbReference type="PROSITE" id="PS01143">
    <property type="entry name" value="RIBOSOMAL_L31"/>
    <property type="match status" value="1"/>
</dbReference>
<keyword id="KW-0687">Ribonucleoprotein</keyword>
<keyword id="KW-0689">Ribosomal protein</keyword>
<organism>
    <name type="scientific">Staphylococcus epidermidis (strain ATCC 12228 / FDA PCI 1200)</name>
    <dbReference type="NCBI Taxonomy" id="176280"/>
    <lineage>
        <taxon>Bacteria</taxon>
        <taxon>Bacillati</taxon>
        <taxon>Bacillota</taxon>
        <taxon>Bacilli</taxon>
        <taxon>Bacillales</taxon>
        <taxon>Staphylococcaceae</taxon>
        <taxon>Staphylococcus</taxon>
    </lineage>
</organism>
<sequence length="85" mass="9779">MKQGIHPEYHKVIFLDTTTNFKFLSGSTKTSSETMEWEDGNEYPVIRLDVSSDSHPFYTGRQKFAAADGRVERFNKKFGLKSNNN</sequence>
<feature type="chain" id="PRO_0000173261" description="Large ribosomal subunit protein bL31B">
    <location>
        <begin position="1"/>
        <end position="85"/>
    </location>
</feature>
<reference key="1">
    <citation type="journal article" date="2003" name="Mol. Microbiol.">
        <title>Genome-based analysis of virulence genes in a non-biofilm-forming Staphylococcus epidermidis strain (ATCC 12228).</title>
        <authorList>
            <person name="Zhang Y.-Q."/>
            <person name="Ren S.-X."/>
            <person name="Li H.-L."/>
            <person name="Wang Y.-X."/>
            <person name="Fu G."/>
            <person name="Yang J."/>
            <person name="Qin Z.-Q."/>
            <person name="Miao Y.-G."/>
            <person name="Wang W.-Y."/>
            <person name="Chen R.-S."/>
            <person name="Shen Y."/>
            <person name="Chen Z."/>
            <person name="Yuan Z.-H."/>
            <person name="Zhao G.-P."/>
            <person name="Qu D."/>
            <person name="Danchin A."/>
            <person name="Wen Y.-M."/>
        </authorList>
    </citation>
    <scope>NUCLEOTIDE SEQUENCE [LARGE SCALE GENOMIC DNA]</scope>
    <source>
        <strain>ATCC 12228 / FDA PCI 1200</strain>
    </source>
</reference>
<evidence type="ECO:0000255" key="1">
    <source>
        <dbReference type="HAMAP-Rule" id="MF_00502"/>
    </source>
</evidence>
<evidence type="ECO:0000305" key="2"/>
<protein>
    <recommendedName>
        <fullName evidence="1">Large ribosomal subunit protein bL31B</fullName>
    </recommendedName>
    <alternativeName>
        <fullName evidence="2">50S ribosomal protein L31 type B</fullName>
    </alternativeName>
</protein>
<comment type="subunit">
    <text evidence="1">Part of the 50S ribosomal subunit.</text>
</comment>
<comment type="similarity">
    <text evidence="1">Belongs to the bacterial ribosomal protein bL31 family. Type B subfamily.</text>
</comment>